<sequence length="568" mass="62624">MHAQDKGGVLPGLSLLLIAVAMVCPSQAAYKLQERYSWNQLDFAFPSARLKEQALASGDYIPTNALPVGVEHFGNRLFVTVPRWRDGIPATLTYINMDHSVTGSPELIPYPDWRANTAGDCSNSITTAYRIKVDECGRLWVLDTGTVGIGNTTTNPCPYAINIFDLTTNTRIRRYELPAADTNPNTFIANIAVDIGKNCDDAFAYFADELGYGLISYSWELNKSWRFSAHSYFFPDPLRGDFNVAGINFQWGEEGIFGMSLTPIRSDGYRTLYFSPLASHRQFAVSTRILRDETRTEDSYHDFVALDERGPNAHTTSRVMSDDGVELFNLIDQNAVGCWHSSMPYSPQFHGIVDRDDVGLVFPADVKIDENKNVWVLSDRMPVFLLSDLDYSDTNFRIYTAPLATLIENTVCDLRNNAYGPPNTVSIPKQAAPGHSAVGPPLYTTTNQYRPVLSQKPQTSWGPSPPSRNYLPALNGNPGIPGSLSKLNNLGAPGQVVSSVSVSTNTVGPSGIEVPKAYVFNQHNGLNYETSGPHLFPTLQPAPSQLGGGLKTYVNARQSGWWHHQQQG</sequence>
<proteinExistence type="inferred from homology"/>
<protein>
    <recommendedName>
        <fullName>Protein yellow</fullName>
    </recommendedName>
</protein>
<reference key="1">
    <citation type="journal article" date="2000" name="Mol. Biol. Evol.">
        <title>Nucleotide variation at the yellow gene region is not reduced in Drosophila subobscura: a study in relation to chromosomal polymorphism.</title>
        <authorList>
            <person name="Munte A."/>
            <person name="Aguade M."/>
            <person name="Segarra C."/>
        </authorList>
    </citation>
    <scope>NUCLEOTIDE SEQUENCE [GENOMIC DNA]</scope>
    <source>
        <strain>A</strain>
    </source>
</reference>
<name>YELL_DROGU</name>
<keyword id="KW-0217">Developmental protein</keyword>
<keyword id="KW-0325">Glycoprotein</keyword>
<keyword id="KW-0964">Secreted</keyword>
<keyword id="KW-0732">Signal</keyword>
<organism>
    <name type="scientific">Drosophila guanche</name>
    <name type="common">Fruit fly</name>
    <dbReference type="NCBI Taxonomy" id="7266"/>
    <lineage>
        <taxon>Eukaryota</taxon>
        <taxon>Metazoa</taxon>
        <taxon>Ecdysozoa</taxon>
        <taxon>Arthropoda</taxon>
        <taxon>Hexapoda</taxon>
        <taxon>Insecta</taxon>
        <taxon>Pterygota</taxon>
        <taxon>Neoptera</taxon>
        <taxon>Endopterygota</taxon>
        <taxon>Diptera</taxon>
        <taxon>Brachycera</taxon>
        <taxon>Muscomorpha</taxon>
        <taxon>Ephydroidea</taxon>
        <taxon>Drosophilidae</taxon>
        <taxon>Drosophila</taxon>
        <taxon>Sophophora</taxon>
    </lineage>
</organism>
<evidence type="ECO:0000250" key="1"/>
<evidence type="ECO:0000255" key="2"/>
<evidence type="ECO:0000305" key="3"/>
<dbReference type="EMBL" id="AJ289813">
    <property type="protein sequence ID" value="CAC16215.1"/>
    <property type="molecule type" value="Genomic_DNA"/>
</dbReference>
<dbReference type="SMR" id="Q9GP81"/>
<dbReference type="GlyCosmos" id="Q9GP81">
    <property type="glycosylation" value="2 sites, No reported glycans"/>
</dbReference>
<dbReference type="OrthoDB" id="7776143at2759"/>
<dbReference type="GO" id="GO:0005576">
    <property type="term" value="C:extracellular region"/>
    <property type="evidence" value="ECO:0007669"/>
    <property type="project" value="UniProtKB-SubCell"/>
</dbReference>
<dbReference type="FunFam" id="2.120.10.30:FF:000046">
    <property type="entry name" value="Blast:Protein yellow"/>
    <property type="match status" value="1"/>
</dbReference>
<dbReference type="Gene3D" id="2.120.10.30">
    <property type="entry name" value="TolB, C-terminal domain"/>
    <property type="match status" value="1"/>
</dbReference>
<dbReference type="InterPro" id="IPR011042">
    <property type="entry name" value="6-blade_b-propeller_TolB-like"/>
</dbReference>
<dbReference type="InterPro" id="IPR017996">
    <property type="entry name" value="Royal_jelly/protein_yellow"/>
</dbReference>
<dbReference type="PANTHER" id="PTHR10009:SF14">
    <property type="entry name" value="PROTEIN YELLOW"/>
    <property type="match status" value="1"/>
</dbReference>
<dbReference type="PANTHER" id="PTHR10009">
    <property type="entry name" value="PROTEIN YELLOW-RELATED"/>
    <property type="match status" value="1"/>
</dbReference>
<dbReference type="Pfam" id="PF03022">
    <property type="entry name" value="MRJP"/>
    <property type="match status" value="1"/>
</dbReference>
<dbReference type="PRINTS" id="PR01366">
    <property type="entry name" value="ROYALJELLY"/>
</dbReference>
<comment type="function">
    <text evidence="1">Controls the pigmentation pattern of the adult cuticle and larval mouth parts.</text>
</comment>
<comment type="subcellular location">
    <subcellularLocation>
        <location>Secreted</location>
    </subcellularLocation>
</comment>
<comment type="similarity">
    <text evidence="3">Belongs to the major royal jelly protein family.</text>
</comment>
<feature type="signal peptide" evidence="2">
    <location>
        <begin position="1"/>
        <end position="28"/>
    </location>
</feature>
<feature type="chain" id="PRO_0000031049" description="Protein yellow">
    <location>
        <begin position="29"/>
        <end position="568"/>
    </location>
</feature>
<feature type="glycosylation site" description="N-linked (GlcNAc...) asparagine" evidence="2">
    <location>
        <position position="151"/>
    </location>
</feature>
<feature type="glycosylation site" description="N-linked (GlcNAc...) asparagine" evidence="2">
    <location>
        <position position="222"/>
    </location>
</feature>
<accession>Q9GP81</accession>
<gene>
    <name type="primary">y</name>
</gene>